<name>RL20_ACHLI</name>
<reference key="1">
    <citation type="journal article" date="2011" name="J. Bacteriol.">
        <title>Complete genome and proteome of Acholeplasma laidlawii.</title>
        <authorList>
            <person name="Lazarev V.N."/>
            <person name="Levitskii S.A."/>
            <person name="Basovskii Y.I."/>
            <person name="Chukin M.M."/>
            <person name="Akopian T.A."/>
            <person name="Vereshchagin V.V."/>
            <person name="Kostrjukova E.S."/>
            <person name="Kovaleva G.Y."/>
            <person name="Kazanov M.D."/>
            <person name="Malko D.B."/>
            <person name="Vitreschak A.G."/>
            <person name="Sernova N.V."/>
            <person name="Gelfand M.S."/>
            <person name="Demina I.A."/>
            <person name="Serebryakova M.V."/>
            <person name="Galyamina M.A."/>
            <person name="Vtyurin N.N."/>
            <person name="Rogov S.I."/>
            <person name="Alexeev D.G."/>
            <person name="Ladygina V.G."/>
            <person name="Govorun V.M."/>
        </authorList>
    </citation>
    <scope>NUCLEOTIDE SEQUENCE [LARGE SCALE GENOMIC DNA]</scope>
    <source>
        <strain>PG-8A</strain>
    </source>
</reference>
<feature type="chain" id="PRO_1000080056" description="Large ribosomal subunit protein bL20">
    <location>
        <begin position="1"/>
        <end position="126"/>
    </location>
</feature>
<evidence type="ECO:0000255" key="1">
    <source>
        <dbReference type="HAMAP-Rule" id="MF_00382"/>
    </source>
</evidence>
<evidence type="ECO:0000305" key="2"/>
<protein>
    <recommendedName>
        <fullName evidence="1">Large ribosomal subunit protein bL20</fullName>
    </recommendedName>
    <alternativeName>
        <fullName evidence="2">50S ribosomal protein L20</fullName>
    </alternativeName>
</protein>
<sequence>MARVKNTPVTRRRRKKILKLAKGYFGSKSTLYRTAHEQVMRALQYAYRDRKQNKRNFRRLWISRINAGAVQNGFKYSKLIHGLSLANVQLNRKVLADLAISEPTVFASYVELAKDAIANPAKYQVK</sequence>
<proteinExistence type="inferred from homology"/>
<dbReference type="EMBL" id="CP000896">
    <property type="protein sequence ID" value="ABX81455.1"/>
    <property type="molecule type" value="Genomic_DNA"/>
</dbReference>
<dbReference type="RefSeq" id="WP_012242786.1">
    <property type="nucleotide sequence ID" value="NC_010163.1"/>
</dbReference>
<dbReference type="SMR" id="A9NGH5"/>
<dbReference type="STRING" id="441768.ACL_0841"/>
<dbReference type="GeneID" id="41338996"/>
<dbReference type="KEGG" id="acl:ACL_0841"/>
<dbReference type="eggNOG" id="COG0292">
    <property type="taxonomic scope" value="Bacteria"/>
</dbReference>
<dbReference type="HOGENOM" id="CLU_123265_0_1_14"/>
<dbReference type="OrthoDB" id="9808966at2"/>
<dbReference type="Proteomes" id="UP000008558">
    <property type="component" value="Chromosome"/>
</dbReference>
<dbReference type="GO" id="GO:1990904">
    <property type="term" value="C:ribonucleoprotein complex"/>
    <property type="evidence" value="ECO:0007669"/>
    <property type="project" value="UniProtKB-KW"/>
</dbReference>
<dbReference type="GO" id="GO:0005840">
    <property type="term" value="C:ribosome"/>
    <property type="evidence" value="ECO:0007669"/>
    <property type="project" value="UniProtKB-KW"/>
</dbReference>
<dbReference type="GO" id="GO:0019843">
    <property type="term" value="F:rRNA binding"/>
    <property type="evidence" value="ECO:0007669"/>
    <property type="project" value="UniProtKB-UniRule"/>
</dbReference>
<dbReference type="GO" id="GO:0003735">
    <property type="term" value="F:structural constituent of ribosome"/>
    <property type="evidence" value="ECO:0007669"/>
    <property type="project" value="InterPro"/>
</dbReference>
<dbReference type="GO" id="GO:0000027">
    <property type="term" value="P:ribosomal large subunit assembly"/>
    <property type="evidence" value="ECO:0007669"/>
    <property type="project" value="UniProtKB-UniRule"/>
</dbReference>
<dbReference type="GO" id="GO:0006412">
    <property type="term" value="P:translation"/>
    <property type="evidence" value="ECO:0007669"/>
    <property type="project" value="InterPro"/>
</dbReference>
<dbReference type="CDD" id="cd07026">
    <property type="entry name" value="Ribosomal_L20"/>
    <property type="match status" value="1"/>
</dbReference>
<dbReference type="FunFam" id="1.10.1900.20:FF:000001">
    <property type="entry name" value="50S ribosomal protein L20"/>
    <property type="match status" value="1"/>
</dbReference>
<dbReference type="Gene3D" id="6.10.160.10">
    <property type="match status" value="1"/>
</dbReference>
<dbReference type="Gene3D" id="1.10.1900.20">
    <property type="entry name" value="Ribosomal protein L20"/>
    <property type="match status" value="1"/>
</dbReference>
<dbReference type="HAMAP" id="MF_00382">
    <property type="entry name" value="Ribosomal_bL20"/>
    <property type="match status" value="1"/>
</dbReference>
<dbReference type="InterPro" id="IPR005813">
    <property type="entry name" value="Ribosomal_bL20"/>
</dbReference>
<dbReference type="InterPro" id="IPR035566">
    <property type="entry name" value="Ribosomal_protein_bL20_C"/>
</dbReference>
<dbReference type="NCBIfam" id="NF011109">
    <property type="entry name" value="PRK14537.1"/>
    <property type="match status" value="1"/>
</dbReference>
<dbReference type="NCBIfam" id="TIGR01032">
    <property type="entry name" value="rplT_bact"/>
    <property type="match status" value="1"/>
</dbReference>
<dbReference type="PANTHER" id="PTHR10986">
    <property type="entry name" value="39S RIBOSOMAL PROTEIN L20"/>
    <property type="match status" value="1"/>
</dbReference>
<dbReference type="Pfam" id="PF00453">
    <property type="entry name" value="Ribosomal_L20"/>
    <property type="match status" value="1"/>
</dbReference>
<dbReference type="PRINTS" id="PR00062">
    <property type="entry name" value="RIBOSOMALL20"/>
</dbReference>
<dbReference type="SUPFAM" id="SSF74731">
    <property type="entry name" value="Ribosomal protein L20"/>
    <property type="match status" value="1"/>
</dbReference>
<comment type="function">
    <text evidence="1">Binds directly to 23S ribosomal RNA and is necessary for the in vitro assembly process of the 50S ribosomal subunit. It is not involved in the protein synthesizing functions of that subunit.</text>
</comment>
<comment type="similarity">
    <text evidence="1">Belongs to the bacterial ribosomal protein bL20 family.</text>
</comment>
<organism>
    <name type="scientific">Acholeplasma laidlawii (strain PG-8A)</name>
    <dbReference type="NCBI Taxonomy" id="441768"/>
    <lineage>
        <taxon>Bacteria</taxon>
        <taxon>Bacillati</taxon>
        <taxon>Mycoplasmatota</taxon>
        <taxon>Mollicutes</taxon>
        <taxon>Acholeplasmatales</taxon>
        <taxon>Acholeplasmataceae</taxon>
        <taxon>Acholeplasma</taxon>
    </lineage>
</organism>
<accession>A9NGH5</accession>
<gene>
    <name evidence="1" type="primary">rplT</name>
    <name type="ordered locus">ACL_0841</name>
</gene>
<keyword id="KW-1185">Reference proteome</keyword>
<keyword id="KW-0687">Ribonucleoprotein</keyword>
<keyword id="KW-0689">Ribosomal protein</keyword>
<keyword id="KW-0694">RNA-binding</keyword>
<keyword id="KW-0699">rRNA-binding</keyword>